<reference key="1">
    <citation type="journal article" date="2006" name="Appl. Environ. Microbiol.">
        <title>Genome sequence of the chemolithoautotrophic nitrite-oxidizing bacterium Nitrobacter winogradskyi Nb-255.</title>
        <authorList>
            <person name="Starkenburg S.R."/>
            <person name="Chain P.S.G."/>
            <person name="Sayavedra-Soto L.A."/>
            <person name="Hauser L."/>
            <person name="Land M.L."/>
            <person name="Larimer F.W."/>
            <person name="Malfatti S.A."/>
            <person name="Klotz M.G."/>
            <person name="Bottomley P.J."/>
            <person name="Arp D.J."/>
            <person name="Hickey W.J."/>
        </authorList>
    </citation>
    <scope>NUCLEOTIDE SEQUENCE [LARGE SCALE GENOMIC DNA]</scope>
    <source>
        <strain>ATCC 25391 / DSM 10237 / CIP 104748 / NCIMB 11846 / Nb-255</strain>
    </source>
</reference>
<name>PANC_NITWN</name>
<dbReference type="EC" id="6.3.2.1" evidence="1"/>
<dbReference type="EMBL" id="CP000115">
    <property type="protein sequence ID" value="ABA04963.1"/>
    <property type="molecule type" value="Genomic_DNA"/>
</dbReference>
<dbReference type="RefSeq" id="WP_011314961.1">
    <property type="nucleotide sequence ID" value="NC_007406.1"/>
</dbReference>
<dbReference type="SMR" id="Q3SRX8"/>
<dbReference type="STRING" id="323098.Nwi_1702"/>
<dbReference type="KEGG" id="nwi:Nwi_1702"/>
<dbReference type="eggNOG" id="COG0414">
    <property type="taxonomic scope" value="Bacteria"/>
</dbReference>
<dbReference type="HOGENOM" id="CLU_047148_0_0_5"/>
<dbReference type="OrthoDB" id="9773087at2"/>
<dbReference type="UniPathway" id="UPA00028">
    <property type="reaction ID" value="UER00005"/>
</dbReference>
<dbReference type="Proteomes" id="UP000002531">
    <property type="component" value="Chromosome"/>
</dbReference>
<dbReference type="GO" id="GO:0005829">
    <property type="term" value="C:cytosol"/>
    <property type="evidence" value="ECO:0007669"/>
    <property type="project" value="TreeGrafter"/>
</dbReference>
<dbReference type="GO" id="GO:0005524">
    <property type="term" value="F:ATP binding"/>
    <property type="evidence" value="ECO:0007669"/>
    <property type="project" value="UniProtKB-KW"/>
</dbReference>
<dbReference type="GO" id="GO:0004592">
    <property type="term" value="F:pantoate-beta-alanine ligase activity"/>
    <property type="evidence" value="ECO:0007669"/>
    <property type="project" value="UniProtKB-UniRule"/>
</dbReference>
<dbReference type="GO" id="GO:0015940">
    <property type="term" value="P:pantothenate biosynthetic process"/>
    <property type="evidence" value="ECO:0007669"/>
    <property type="project" value="UniProtKB-UniRule"/>
</dbReference>
<dbReference type="CDD" id="cd00560">
    <property type="entry name" value="PanC"/>
    <property type="match status" value="1"/>
</dbReference>
<dbReference type="FunFam" id="3.40.50.620:FF:000114">
    <property type="entry name" value="Pantothenate synthetase"/>
    <property type="match status" value="1"/>
</dbReference>
<dbReference type="Gene3D" id="3.40.50.620">
    <property type="entry name" value="HUPs"/>
    <property type="match status" value="1"/>
</dbReference>
<dbReference type="Gene3D" id="3.30.1300.10">
    <property type="entry name" value="Pantoate-beta-alanine ligase, C-terminal domain"/>
    <property type="match status" value="1"/>
</dbReference>
<dbReference type="HAMAP" id="MF_00158">
    <property type="entry name" value="PanC"/>
    <property type="match status" value="1"/>
</dbReference>
<dbReference type="InterPro" id="IPR004821">
    <property type="entry name" value="Cyt_trans-like"/>
</dbReference>
<dbReference type="InterPro" id="IPR003721">
    <property type="entry name" value="Pantoate_ligase"/>
</dbReference>
<dbReference type="InterPro" id="IPR042176">
    <property type="entry name" value="Pantoate_ligase_C"/>
</dbReference>
<dbReference type="InterPro" id="IPR014729">
    <property type="entry name" value="Rossmann-like_a/b/a_fold"/>
</dbReference>
<dbReference type="NCBIfam" id="TIGR00125">
    <property type="entry name" value="cyt_tran_rel"/>
    <property type="match status" value="1"/>
</dbReference>
<dbReference type="NCBIfam" id="TIGR00018">
    <property type="entry name" value="panC"/>
    <property type="match status" value="1"/>
</dbReference>
<dbReference type="PANTHER" id="PTHR21299">
    <property type="entry name" value="CYTIDYLATE KINASE/PANTOATE-BETA-ALANINE LIGASE"/>
    <property type="match status" value="1"/>
</dbReference>
<dbReference type="PANTHER" id="PTHR21299:SF1">
    <property type="entry name" value="PANTOATE--BETA-ALANINE LIGASE"/>
    <property type="match status" value="1"/>
</dbReference>
<dbReference type="Pfam" id="PF02569">
    <property type="entry name" value="Pantoate_ligase"/>
    <property type="match status" value="1"/>
</dbReference>
<dbReference type="SUPFAM" id="SSF52374">
    <property type="entry name" value="Nucleotidylyl transferase"/>
    <property type="match status" value="1"/>
</dbReference>
<evidence type="ECO:0000255" key="1">
    <source>
        <dbReference type="HAMAP-Rule" id="MF_00158"/>
    </source>
</evidence>
<organism>
    <name type="scientific">Nitrobacter winogradskyi (strain ATCC 25391 / DSM 10237 / CIP 104748 / NCIMB 11846 / Nb-255)</name>
    <dbReference type="NCBI Taxonomy" id="323098"/>
    <lineage>
        <taxon>Bacteria</taxon>
        <taxon>Pseudomonadati</taxon>
        <taxon>Pseudomonadota</taxon>
        <taxon>Alphaproteobacteria</taxon>
        <taxon>Hyphomicrobiales</taxon>
        <taxon>Nitrobacteraceae</taxon>
        <taxon>Nitrobacter</taxon>
    </lineage>
</organism>
<gene>
    <name evidence="1" type="primary">panC</name>
    <name type="ordered locus">Nwi_1702</name>
</gene>
<feature type="chain" id="PRO_0000305497" description="Pantothenate synthetase">
    <location>
        <begin position="1"/>
        <end position="283"/>
    </location>
</feature>
<feature type="active site" description="Proton donor" evidence="1">
    <location>
        <position position="41"/>
    </location>
</feature>
<feature type="binding site" evidence="1">
    <location>
        <begin position="34"/>
        <end position="41"/>
    </location>
    <ligand>
        <name>ATP</name>
        <dbReference type="ChEBI" id="CHEBI:30616"/>
    </ligand>
</feature>
<feature type="binding site" evidence="1">
    <location>
        <position position="65"/>
    </location>
    <ligand>
        <name>(R)-pantoate</name>
        <dbReference type="ChEBI" id="CHEBI:15980"/>
    </ligand>
</feature>
<feature type="binding site" evidence="1">
    <location>
        <position position="65"/>
    </location>
    <ligand>
        <name>beta-alanine</name>
        <dbReference type="ChEBI" id="CHEBI:57966"/>
    </ligand>
</feature>
<feature type="binding site" evidence="1">
    <location>
        <begin position="152"/>
        <end position="155"/>
    </location>
    <ligand>
        <name>ATP</name>
        <dbReference type="ChEBI" id="CHEBI:30616"/>
    </ligand>
</feature>
<feature type="binding site" evidence="1">
    <location>
        <position position="158"/>
    </location>
    <ligand>
        <name>(R)-pantoate</name>
        <dbReference type="ChEBI" id="CHEBI:15980"/>
    </ligand>
</feature>
<feature type="binding site" evidence="1">
    <location>
        <position position="181"/>
    </location>
    <ligand>
        <name>ATP</name>
        <dbReference type="ChEBI" id="CHEBI:30616"/>
    </ligand>
</feature>
<feature type="binding site" evidence="1">
    <location>
        <begin position="189"/>
        <end position="192"/>
    </location>
    <ligand>
        <name>ATP</name>
        <dbReference type="ChEBI" id="CHEBI:30616"/>
    </ligand>
</feature>
<sequence>MPPAPAIVRTLPSLRRALERLRARRGTIALVPTMGALHEGHLALVRQAKRRASRVIVSIFVNPTQFAPHEDFGSYPRTWKADLAKLAEAKTDLIWRPDVSTMYPRDFATRISTEGPAIARLEDHFRPHFFGGVTTVVGKLFIQCRPDVALFGQKDYQQLKVVTRMVADLDLGVKIVGVPIVREPDGLAMSSRNVYLSNEQRARAPTLYRTLKDAAGRLRNGDHLEAVMADGARTIEDTGFSLDYFEARHAETLSPVGSLKDGPVRLLVAAKIGDTRLIDNLGV</sequence>
<accession>Q3SRX8</accession>
<proteinExistence type="inferred from homology"/>
<comment type="function">
    <text evidence="1">Catalyzes the condensation of pantoate with beta-alanine in an ATP-dependent reaction via a pantoyl-adenylate intermediate.</text>
</comment>
<comment type="catalytic activity">
    <reaction evidence="1">
        <text>(R)-pantoate + beta-alanine + ATP = (R)-pantothenate + AMP + diphosphate + H(+)</text>
        <dbReference type="Rhea" id="RHEA:10912"/>
        <dbReference type="ChEBI" id="CHEBI:15378"/>
        <dbReference type="ChEBI" id="CHEBI:15980"/>
        <dbReference type="ChEBI" id="CHEBI:29032"/>
        <dbReference type="ChEBI" id="CHEBI:30616"/>
        <dbReference type="ChEBI" id="CHEBI:33019"/>
        <dbReference type="ChEBI" id="CHEBI:57966"/>
        <dbReference type="ChEBI" id="CHEBI:456215"/>
        <dbReference type="EC" id="6.3.2.1"/>
    </reaction>
</comment>
<comment type="pathway">
    <text evidence="1">Cofactor biosynthesis; (R)-pantothenate biosynthesis; (R)-pantothenate from (R)-pantoate and beta-alanine: step 1/1.</text>
</comment>
<comment type="subunit">
    <text evidence="1">Homodimer.</text>
</comment>
<comment type="subcellular location">
    <subcellularLocation>
        <location evidence="1">Cytoplasm</location>
    </subcellularLocation>
</comment>
<comment type="miscellaneous">
    <text evidence="1">The reaction proceeds by a bi uni uni bi ping pong mechanism.</text>
</comment>
<comment type="similarity">
    <text evidence="1">Belongs to the pantothenate synthetase family.</text>
</comment>
<keyword id="KW-0067">ATP-binding</keyword>
<keyword id="KW-0963">Cytoplasm</keyword>
<keyword id="KW-0436">Ligase</keyword>
<keyword id="KW-0547">Nucleotide-binding</keyword>
<keyword id="KW-0566">Pantothenate biosynthesis</keyword>
<keyword id="KW-1185">Reference proteome</keyword>
<protein>
    <recommendedName>
        <fullName evidence="1">Pantothenate synthetase</fullName>
        <shortName evidence="1">PS</shortName>
        <ecNumber evidence="1">6.3.2.1</ecNumber>
    </recommendedName>
    <alternativeName>
        <fullName evidence="1">Pantoate--beta-alanine ligase</fullName>
    </alternativeName>
    <alternativeName>
        <fullName evidence="1">Pantoate-activating enzyme</fullName>
    </alternativeName>
</protein>